<keyword id="KW-0255">Endonuclease</keyword>
<keyword id="KW-0378">Hydrolase</keyword>
<keyword id="KW-0540">Nuclease</keyword>
<keyword id="KW-0694">RNA-binding</keyword>
<keyword id="KW-0819">tRNA processing</keyword>
<evidence type="ECO:0000255" key="1">
    <source>
        <dbReference type="HAMAP-Rule" id="MF_00227"/>
    </source>
</evidence>
<sequence length="119" mass="13800">MVKLAFPRELRLLTPSHFTFVFQQPQRAGTPQITILGRLNELGHPRIGLTVAKKHVKRAHERNRIKRLTRESFRLHQHALPSMDFVVLVKKGVADLDNRALTEALEKLWRRHCRQAPAS</sequence>
<proteinExistence type="inferred from homology"/>
<gene>
    <name evidence="1" type="primary">rnpA</name>
    <name type="ordered locus">YPN_3957</name>
    <name type="ORF">YP516_4490</name>
</gene>
<reference key="1">
    <citation type="journal article" date="2006" name="J. Bacteriol.">
        <title>Complete genome sequence of Yersinia pestis strains Antiqua and Nepal516: evidence of gene reduction in an emerging pathogen.</title>
        <authorList>
            <person name="Chain P.S.G."/>
            <person name="Hu P."/>
            <person name="Malfatti S.A."/>
            <person name="Radnedge L."/>
            <person name="Larimer F."/>
            <person name="Vergez L.M."/>
            <person name="Worsham P."/>
            <person name="Chu M.C."/>
            <person name="Andersen G.L."/>
        </authorList>
    </citation>
    <scope>NUCLEOTIDE SEQUENCE [LARGE SCALE GENOMIC DNA]</scope>
    <source>
        <strain>Nepal516</strain>
    </source>
</reference>
<reference key="2">
    <citation type="submission" date="2009-04" db="EMBL/GenBank/DDBJ databases">
        <title>Yersinia pestis Nepal516A whole genome shotgun sequencing project.</title>
        <authorList>
            <person name="Plunkett G. III"/>
            <person name="Anderson B.D."/>
            <person name="Baumler D.J."/>
            <person name="Burland V."/>
            <person name="Cabot E.L."/>
            <person name="Glasner J.D."/>
            <person name="Mau B."/>
            <person name="Neeno-Eckwall E."/>
            <person name="Perna N.T."/>
            <person name="Munk A.C."/>
            <person name="Tapia R."/>
            <person name="Green L.D."/>
            <person name="Rogers Y.C."/>
            <person name="Detter J.C."/>
            <person name="Bruce D.C."/>
            <person name="Brettin T.S."/>
        </authorList>
    </citation>
    <scope>NUCLEOTIDE SEQUENCE [LARGE SCALE GENOMIC DNA]</scope>
    <source>
        <strain>Nepal516</strain>
    </source>
</reference>
<dbReference type="EC" id="3.1.26.5" evidence="1"/>
<dbReference type="EMBL" id="CP000305">
    <property type="protein sequence ID" value="ABG20284.1"/>
    <property type="molecule type" value="Genomic_DNA"/>
</dbReference>
<dbReference type="EMBL" id="ACNQ01000019">
    <property type="protein sequence ID" value="EEO74880.1"/>
    <property type="molecule type" value="Genomic_DNA"/>
</dbReference>
<dbReference type="RefSeq" id="WP_002228153.1">
    <property type="nucleotide sequence ID" value="NZ_ACNQ01000019.1"/>
</dbReference>
<dbReference type="SMR" id="Q1CCJ6"/>
<dbReference type="GeneID" id="57974623"/>
<dbReference type="KEGG" id="ypn:YPN_3957"/>
<dbReference type="HOGENOM" id="CLU_117179_11_0_6"/>
<dbReference type="Proteomes" id="UP000008936">
    <property type="component" value="Chromosome"/>
</dbReference>
<dbReference type="GO" id="GO:0030677">
    <property type="term" value="C:ribonuclease P complex"/>
    <property type="evidence" value="ECO:0007669"/>
    <property type="project" value="TreeGrafter"/>
</dbReference>
<dbReference type="GO" id="GO:0042781">
    <property type="term" value="F:3'-tRNA processing endoribonuclease activity"/>
    <property type="evidence" value="ECO:0007669"/>
    <property type="project" value="TreeGrafter"/>
</dbReference>
<dbReference type="GO" id="GO:0004526">
    <property type="term" value="F:ribonuclease P activity"/>
    <property type="evidence" value="ECO:0007669"/>
    <property type="project" value="UniProtKB-UniRule"/>
</dbReference>
<dbReference type="GO" id="GO:0000049">
    <property type="term" value="F:tRNA binding"/>
    <property type="evidence" value="ECO:0007669"/>
    <property type="project" value="UniProtKB-UniRule"/>
</dbReference>
<dbReference type="GO" id="GO:0001682">
    <property type="term" value="P:tRNA 5'-leader removal"/>
    <property type="evidence" value="ECO:0007669"/>
    <property type="project" value="UniProtKB-UniRule"/>
</dbReference>
<dbReference type="FunFam" id="3.30.230.10:FF:000016">
    <property type="entry name" value="Ribonuclease P protein component"/>
    <property type="match status" value="1"/>
</dbReference>
<dbReference type="Gene3D" id="3.30.230.10">
    <property type="match status" value="1"/>
</dbReference>
<dbReference type="HAMAP" id="MF_00227">
    <property type="entry name" value="RNase_P"/>
    <property type="match status" value="1"/>
</dbReference>
<dbReference type="InterPro" id="IPR020568">
    <property type="entry name" value="Ribosomal_Su5_D2-typ_SF"/>
</dbReference>
<dbReference type="InterPro" id="IPR014721">
    <property type="entry name" value="Ribsml_uS5_D2-typ_fold_subgr"/>
</dbReference>
<dbReference type="InterPro" id="IPR000100">
    <property type="entry name" value="RNase_P"/>
</dbReference>
<dbReference type="InterPro" id="IPR020539">
    <property type="entry name" value="RNase_P_CS"/>
</dbReference>
<dbReference type="NCBIfam" id="TIGR00188">
    <property type="entry name" value="rnpA"/>
    <property type="match status" value="1"/>
</dbReference>
<dbReference type="PANTHER" id="PTHR33992">
    <property type="entry name" value="RIBONUCLEASE P PROTEIN COMPONENT"/>
    <property type="match status" value="1"/>
</dbReference>
<dbReference type="PANTHER" id="PTHR33992:SF1">
    <property type="entry name" value="RIBONUCLEASE P PROTEIN COMPONENT"/>
    <property type="match status" value="1"/>
</dbReference>
<dbReference type="Pfam" id="PF00825">
    <property type="entry name" value="Ribonuclease_P"/>
    <property type="match status" value="1"/>
</dbReference>
<dbReference type="SUPFAM" id="SSF54211">
    <property type="entry name" value="Ribosomal protein S5 domain 2-like"/>
    <property type="match status" value="1"/>
</dbReference>
<dbReference type="PROSITE" id="PS00648">
    <property type="entry name" value="RIBONUCLEASE_P"/>
    <property type="match status" value="1"/>
</dbReference>
<accession>Q1CCJ6</accession>
<accession>D1Q2X7</accession>
<name>RNPA_YERPN</name>
<feature type="chain" id="PRO_1000021495" description="Ribonuclease P protein component">
    <location>
        <begin position="1"/>
        <end position="119"/>
    </location>
</feature>
<protein>
    <recommendedName>
        <fullName evidence="1">Ribonuclease P protein component</fullName>
        <shortName evidence="1">RNase P protein</shortName>
        <shortName evidence="1">RNaseP protein</shortName>
        <ecNumber evidence="1">3.1.26.5</ecNumber>
    </recommendedName>
    <alternativeName>
        <fullName evidence="1">Protein C5</fullName>
    </alternativeName>
</protein>
<comment type="function">
    <text evidence="1">RNaseP catalyzes the removal of the 5'-leader sequence from pre-tRNA to produce the mature 5'-terminus. It can also cleave other RNA substrates such as 4.5S RNA. The protein component plays an auxiliary but essential role in vivo by binding to the 5'-leader sequence and broadening the substrate specificity of the ribozyme.</text>
</comment>
<comment type="catalytic activity">
    <reaction evidence="1">
        <text>Endonucleolytic cleavage of RNA, removing 5'-extranucleotides from tRNA precursor.</text>
        <dbReference type="EC" id="3.1.26.5"/>
    </reaction>
</comment>
<comment type="subunit">
    <text evidence="1">Consists of a catalytic RNA component (M1 or rnpB) and a protein subunit.</text>
</comment>
<comment type="similarity">
    <text evidence="1">Belongs to the RnpA family.</text>
</comment>
<organism>
    <name type="scientific">Yersinia pestis bv. Antiqua (strain Nepal516)</name>
    <dbReference type="NCBI Taxonomy" id="377628"/>
    <lineage>
        <taxon>Bacteria</taxon>
        <taxon>Pseudomonadati</taxon>
        <taxon>Pseudomonadota</taxon>
        <taxon>Gammaproteobacteria</taxon>
        <taxon>Enterobacterales</taxon>
        <taxon>Yersiniaceae</taxon>
        <taxon>Yersinia</taxon>
    </lineage>
</organism>